<organism>
    <name type="scientific">Macaca fascicularis</name>
    <name type="common">Crab-eating macaque</name>
    <name type="synonym">Cynomolgus monkey</name>
    <dbReference type="NCBI Taxonomy" id="9541"/>
    <lineage>
        <taxon>Eukaryota</taxon>
        <taxon>Metazoa</taxon>
        <taxon>Chordata</taxon>
        <taxon>Craniata</taxon>
        <taxon>Vertebrata</taxon>
        <taxon>Euteleostomi</taxon>
        <taxon>Mammalia</taxon>
        <taxon>Eutheria</taxon>
        <taxon>Euarchontoglires</taxon>
        <taxon>Primates</taxon>
        <taxon>Haplorrhini</taxon>
        <taxon>Catarrhini</taxon>
        <taxon>Cercopithecidae</taxon>
        <taxon>Cercopithecinae</taxon>
        <taxon>Macaca</taxon>
    </lineage>
</organism>
<reference key="1">
    <citation type="submission" date="2005-06" db="EMBL/GenBank/DDBJ databases">
        <title>DNA sequences of macaque genes expressed in brain or testis and its evolutionary implications.</title>
        <authorList>
            <consortium name="International consortium for macaque cDNA sequencing and analysis"/>
        </authorList>
    </citation>
    <scope>NUCLEOTIDE SEQUENCE [LARGE SCALE MRNA]</scope>
    <source>
        <tissue>Temporal cortex</tissue>
    </source>
</reference>
<proteinExistence type="evidence at transcript level"/>
<feature type="initiator methionine" description="Removed" evidence="2">
    <location>
        <position position="1"/>
    </location>
</feature>
<feature type="chain" id="PRO_0000260293" description="L-lactate dehydrogenase B chain">
    <location>
        <begin position="2"/>
        <end position="334"/>
    </location>
</feature>
<feature type="active site" description="Proton acceptor" evidence="1">
    <location>
        <position position="194"/>
    </location>
</feature>
<feature type="binding site" evidence="1">
    <location>
        <begin position="53"/>
        <end position="58"/>
    </location>
    <ligand>
        <name>NAD(+)</name>
        <dbReference type="ChEBI" id="CHEBI:57540"/>
    </ligand>
</feature>
<feature type="binding site" evidence="1">
    <location>
        <position position="100"/>
    </location>
    <ligand>
        <name>NAD(+)</name>
        <dbReference type="ChEBI" id="CHEBI:57540"/>
    </ligand>
</feature>
<feature type="binding site" evidence="1">
    <location>
        <position position="107"/>
    </location>
    <ligand>
        <name>substrate</name>
    </ligand>
</feature>
<feature type="binding site" evidence="1">
    <location>
        <position position="139"/>
    </location>
    <ligand>
        <name>NAD(+)</name>
        <dbReference type="ChEBI" id="CHEBI:57540"/>
    </ligand>
</feature>
<feature type="binding site" evidence="1">
    <location>
        <position position="139"/>
    </location>
    <ligand>
        <name>substrate</name>
    </ligand>
</feature>
<feature type="binding site" evidence="1">
    <location>
        <position position="170"/>
    </location>
    <ligand>
        <name>substrate</name>
    </ligand>
</feature>
<feature type="binding site" evidence="1">
    <location>
        <position position="249"/>
    </location>
    <ligand>
        <name>substrate</name>
    </ligand>
</feature>
<feature type="modified residue" description="N-acetylalanine" evidence="2">
    <location>
        <position position="2"/>
    </location>
</feature>
<feature type="modified residue" description="N6-acetyllysine" evidence="2">
    <location>
        <position position="7"/>
    </location>
</feature>
<feature type="modified residue" description="Phosphoserine" evidence="2">
    <location>
        <position position="44"/>
    </location>
</feature>
<feature type="modified residue" description="N6-acetyllysine" evidence="2">
    <location>
        <position position="58"/>
    </location>
</feature>
<feature type="modified residue" description="N6-acetyllysine" evidence="2">
    <location>
        <position position="119"/>
    </location>
</feature>
<feature type="modified residue" description="Phosphotyrosine" evidence="2">
    <location>
        <position position="240"/>
    </location>
</feature>
<feature type="modified residue" description="N6-acetyllysine" evidence="2">
    <location>
        <position position="329"/>
    </location>
</feature>
<name>LDHB_MACFA</name>
<accession>Q4R5B6</accession>
<dbReference type="EC" id="1.1.1.27" evidence="2"/>
<dbReference type="EMBL" id="AB169628">
    <property type="protein sequence ID" value="BAE01709.1"/>
    <property type="molecule type" value="mRNA"/>
</dbReference>
<dbReference type="RefSeq" id="XP_005550541.1">
    <property type="nucleotide sequence ID" value="XM_005550484.2"/>
</dbReference>
<dbReference type="RefSeq" id="XP_005563965.1">
    <property type="nucleotide sequence ID" value="XM_005563908.2"/>
</dbReference>
<dbReference type="RefSeq" id="XP_015285642.1">
    <property type="nucleotide sequence ID" value="XM_015430156.3"/>
</dbReference>
<dbReference type="SMR" id="Q4R5B6"/>
<dbReference type="STRING" id="9541.ENSMFAP00000018328"/>
<dbReference type="Ensembl" id="ENSMFAT00000090928.1">
    <property type="protein sequence ID" value="ENSMFAP00000046482.1"/>
    <property type="gene ID" value="ENSMFAG00000032247.2"/>
</dbReference>
<dbReference type="GeneID" id="101925612"/>
<dbReference type="KEGG" id="mcf:101925612"/>
<dbReference type="KEGG" id="mcf:102117828"/>
<dbReference type="KEGG" id="mcf:102119787"/>
<dbReference type="CTD" id="3945"/>
<dbReference type="VEuPathDB" id="HostDB:ENSMFAG00000032247"/>
<dbReference type="eggNOG" id="KOG1495">
    <property type="taxonomic scope" value="Eukaryota"/>
</dbReference>
<dbReference type="GeneTree" id="ENSGT00940000153525"/>
<dbReference type="OMA" id="AHVREKG"/>
<dbReference type="OrthoDB" id="13242at314294"/>
<dbReference type="UniPathway" id="UPA00554">
    <property type="reaction ID" value="UER00611"/>
</dbReference>
<dbReference type="Proteomes" id="UP000233100">
    <property type="component" value="Chromosome 11"/>
</dbReference>
<dbReference type="Bgee" id="ENSMFAG00000032247">
    <property type="expression patterns" value="Expressed in heart and 13 other cell types or tissues"/>
</dbReference>
<dbReference type="GO" id="GO:0005743">
    <property type="term" value="C:mitochondrial inner membrane"/>
    <property type="evidence" value="ECO:0000250"/>
    <property type="project" value="UniProtKB"/>
</dbReference>
<dbReference type="GO" id="GO:0004459">
    <property type="term" value="F:L-lactate dehydrogenase activity"/>
    <property type="evidence" value="ECO:0000250"/>
    <property type="project" value="UniProtKB"/>
</dbReference>
<dbReference type="GO" id="GO:0006089">
    <property type="term" value="P:lactate metabolic process"/>
    <property type="evidence" value="ECO:0007669"/>
    <property type="project" value="TreeGrafter"/>
</dbReference>
<dbReference type="CDD" id="cd05293">
    <property type="entry name" value="LDH_1"/>
    <property type="match status" value="1"/>
</dbReference>
<dbReference type="FunFam" id="3.40.50.720:FF:000029">
    <property type="entry name" value="L-lactate dehydrogenase A chain"/>
    <property type="match status" value="1"/>
</dbReference>
<dbReference type="FunFam" id="3.90.110.10:FF:000003">
    <property type="entry name" value="L-lactate dehydrogenase A chain"/>
    <property type="match status" value="1"/>
</dbReference>
<dbReference type="Gene3D" id="3.90.110.10">
    <property type="entry name" value="Lactate dehydrogenase/glycoside hydrolase, family 4, C-terminal"/>
    <property type="match status" value="1"/>
</dbReference>
<dbReference type="Gene3D" id="3.40.50.720">
    <property type="entry name" value="NAD(P)-binding Rossmann-like Domain"/>
    <property type="match status" value="1"/>
</dbReference>
<dbReference type="HAMAP" id="MF_00488">
    <property type="entry name" value="Lactate_dehydrog"/>
    <property type="match status" value="1"/>
</dbReference>
<dbReference type="InterPro" id="IPR001557">
    <property type="entry name" value="L-lactate/malate_DH"/>
</dbReference>
<dbReference type="InterPro" id="IPR011304">
    <property type="entry name" value="L-lactate_DH"/>
</dbReference>
<dbReference type="InterPro" id="IPR018177">
    <property type="entry name" value="L-lactate_DH_AS"/>
</dbReference>
<dbReference type="InterPro" id="IPR022383">
    <property type="entry name" value="Lactate/malate_DH_C"/>
</dbReference>
<dbReference type="InterPro" id="IPR001236">
    <property type="entry name" value="Lactate/malate_DH_N"/>
</dbReference>
<dbReference type="InterPro" id="IPR015955">
    <property type="entry name" value="Lactate_DH/Glyco_Ohase_4_C"/>
</dbReference>
<dbReference type="InterPro" id="IPR036291">
    <property type="entry name" value="NAD(P)-bd_dom_sf"/>
</dbReference>
<dbReference type="NCBIfam" id="TIGR01771">
    <property type="entry name" value="L-LDH-NAD"/>
    <property type="match status" value="1"/>
</dbReference>
<dbReference type="NCBIfam" id="NF000824">
    <property type="entry name" value="PRK00066.1"/>
    <property type="match status" value="1"/>
</dbReference>
<dbReference type="PANTHER" id="PTHR43128">
    <property type="entry name" value="L-2-HYDROXYCARBOXYLATE DEHYDROGENASE (NAD(P)(+))"/>
    <property type="match status" value="1"/>
</dbReference>
<dbReference type="PANTHER" id="PTHR43128:SF2">
    <property type="entry name" value="L-LACTATE DEHYDROGENASE B CHAIN"/>
    <property type="match status" value="1"/>
</dbReference>
<dbReference type="Pfam" id="PF02866">
    <property type="entry name" value="Ldh_1_C"/>
    <property type="match status" value="1"/>
</dbReference>
<dbReference type="Pfam" id="PF00056">
    <property type="entry name" value="Ldh_1_N"/>
    <property type="match status" value="1"/>
</dbReference>
<dbReference type="PIRSF" id="PIRSF000102">
    <property type="entry name" value="Lac_mal_DH"/>
    <property type="match status" value="1"/>
</dbReference>
<dbReference type="PRINTS" id="PR00086">
    <property type="entry name" value="LLDHDRGNASE"/>
</dbReference>
<dbReference type="SUPFAM" id="SSF56327">
    <property type="entry name" value="LDH C-terminal domain-like"/>
    <property type="match status" value="1"/>
</dbReference>
<dbReference type="SUPFAM" id="SSF51735">
    <property type="entry name" value="NAD(P)-binding Rossmann-fold domains"/>
    <property type="match status" value="1"/>
</dbReference>
<dbReference type="PROSITE" id="PS00064">
    <property type="entry name" value="L_LDH"/>
    <property type="match status" value="1"/>
</dbReference>
<comment type="function">
    <text evidence="2">Interconverts simultaneously and stereospecifically pyruvate and lactate with concomitant interconversion of NADH and NAD(+).</text>
</comment>
<comment type="catalytic activity">
    <reaction evidence="2">
        <text>(S)-lactate + NAD(+) = pyruvate + NADH + H(+)</text>
        <dbReference type="Rhea" id="RHEA:23444"/>
        <dbReference type="ChEBI" id="CHEBI:15361"/>
        <dbReference type="ChEBI" id="CHEBI:15378"/>
        <dbReference type="ChEBI" id="CHEBI:16651"/>
        <dbReference type="ChEBI" id="CHEBI:57540"/>
        <dbReference type="ChEBI" id="CHEBI:57945"/>
        <dbReference type="EC" id="1.1.1.27"/>
    </reaction>
    <physiologicalReaction direction="left-to-right" evidence="2">
        <dbReference type="Rhea" id="RHEA:23445"/>
    </physiologicalReaction>
    <physiologicalReaction direction="right-to-left" evidence="2">
        <dbReference type="Rhea" id="RHEA:23446"/>
    </physiologicalReaction>
</comment>
<comment type="pathway">
    <text evidence="2">Fermentation; pyruvate fermentation to lactate; (S)-lactate from pyruvate: step 1/1.</text>
</comment>
<comment type="subunit">
    <text evidence="2">Homotetramer. Interacts with PTEN upstream reading frame protein MP31; the interaction leads to inhibition of mitochondrial lactate dehydrogenase activity, preventing conversion of lactate to pyruvate in mitochondria.</text>
</comment>
<comment type="subcellular location">
    <subcellularLocation>
        <location evidence="1">Cytoplasm</location>
    </subcellularLocation>
    <subcellularLocation>
        <location evidence="2">Mitochondrion inner membrane</location>
        <topology evidence="3">Peripheral membrane protein</topology>
    </subcellularLocation>
</comment>
<comment type="similarity">
    <text evidence="3">Belongs to the LDH/MDH superfamily. LDH family.</text>
</comment>
<protein>
    <recommendedName>
        <fullName>L-lactate dehydrogenase B chain</fullName>
        <shortName>LDH-B</shortName>
        <ecNumber evidence="2">1.1.1.27</ecNumber>
    </recommendedName>
</protein>
<gene>
    <name type="primary">LDHB</name>
    <name type="ORF">QtrA-12628</name>
</gene>
<evidence type="ECO:0000250" key="1"/>
<evidence type="ECO:0000250" key="2">
    <source>
        <dbReference type="UniProtKB" id="P07195"/>
    </source>
</evidence>
<evidence type="ECO:0000305" key="3"/>
<sequence length="334" mass="36638">MATLKEKLIAPVAEEEATVPNNKITVVGVGQVGMACAISILGKSLADELALVDVLEDKLKGEMMDLQHGSLFLQTPKIVADKDYSVTANSKIVVVTAGVRQQEGESRLNLVQRNVNVFKFIIPQIVKYSPDCIIIVVSNPVDILTYVTWKLSGLPKHRVIGSGCNLDSARFRYLMAEKLGIHPSSCHGWILGEHGDSSVAVWSGVNVAGVSLQELNPEMGTDNDSENWKEVHKMVVESAYEVIKLKGYTNWAIGLSVADLIESMLKNLSRIHPVSTMVKGMYGIENEVFLSLPCILNARGLTSVINQKLKDDEVAQLKKSADTLWDIQKDLKDL</sequence>
<keyword id="KW-0007">Acetylation</keyword>
<keyword id="KW-0963">Cytoplasm</keyword>
<keyword id="KW-0472">Membrane</keyword>
<keyword id="KW-0496">Mitochondrion</keyword>
<keyword id="KW-0999">Mitochondrion inner membrane</keyword>
<keyword id="KW-0520">NAD</keyword>
<keyword id="KW-0560">Oxidoreductase</keyword>
<keyword id="KW-0597">Phosphoprotein</keyword>
<keyword id="KW-1185">Reference proteome</keyword>